<reference key="1">
    <citation type="submission" date="2008-12" db="EMBL/GenBank/DDBJ databases">
        <title>Complete sequence of chromosome of Shewanella baltica OS223.</title>
        <authorList>
            <consortium name="US DOE Joint Genome Institute"/>
            <person name="Lucas S."/>
            <person name="Copeland A."/>
            <person name="Lapidus A."/>
            <person name="Glavina del Rio T."/>
            <person name="Dalin E."/>
            <person name="Tice H."/>
            <person name="Bruce D."/>
            <person name="Goodwin L."/>
            <person name="Pitluck S."/>
            <person name="Chertkov O."/>
            <person name="Meincke L."/>
            <person name="Brettin T."/>
            <person name="Detter J.C."/>
            <person name="Han C."/>
            <person name="Kuske C.R."/>
            <person name="Larimer F."/>
            <person name="Land M."/>
            <person name="Hauser L."/>
            <person name="Kyrpides N."/>
            <person name="Ovchinnikova G."/>
            <person name="Brettar I."/>
            <person name="Rodrigues J."/>
            <person name="Konstantinidis K."/>
            <person name="Tiedje J."/>
        </authorList>
    </citation>
    <scope>NUCLEOTIDE SEQUENCE [LARGE SCALE GENOMIC DNA]</scope>
    <source>
        <strain>OS223</strain>
    </source>
</reference>
<accession>B8E3P4</accession>
<comment type="function">
    <text evidence="1">Plays an essential role in the initiation and regulation of chromosomal replication. ATP-DnaA binds to the origin of replication (oriC) to initiate formation of the DNA replication initiation complex once per cell cycle. Binds the DnaA box (a 9 base pair repeat at the origin) and separates the double-stranded (ds)DNA. Forms a right-handed helical filament on oriC DNA; dsDNA binds to the exterior of the filament while single-stranded (ss)DNA is stabiized in the filament's interior. The ATP-DnaA-oriC complex binds and stabilizes one strand of the AT-rich DNA unwinding element (DUE), permitting loading of DNA polymerase. After initiation quickly degrades to an ADP-DnaA complex that is not apt for DNA replication. Binds acidic phospholipids.</text>
</comment>
<comment type="subunit">
    <text evidence="1">Oligomerizes as a right-handed, spiral filament on DNA at oriC.</text>
</comment>
<comment type="subcellular location">
    <subcellularLocation>
        <location evidence="1">Cytoplasm</location>
    </subcellularLocation>
</comment>
<comment type="domain">
    <text evidence="1">Domain I is involved in oligomerization and binding regulators, domain II is flexibile and of varying length in different bacteria, domain III forms the AAA+ region, while domain IV binds dsDNA.</text>
</comment>
<comment type="similarity">
    <text evidence="1">Belongs to the DnaA family.</text>
</comment>
<sequence>MAVSLWQQCIGRLQDELSAQQFSMWIRPLQAEMDGDTLVLYAPNRFVLDWVRDKYINIINQFFTEQMGSDAPKLRFDIGSRPSAKKPSVPAPIAPTRVANTQTKATVGTTFNVQAEPMANANHRSNINPSYQFDNFVEGKSNQLGKAAALQVAENPGGAYNPLFLYGGTGLGKTHLLHAVGNGIIKNNPNAKVVYMHSERFVQDMVKALQNNAIEEFKRYYRSVDALFIDDIQFFANKDRSQEEFFHTFNALLEGNHQIILTSDRYPKEIDGVEDRLKSRFGWGLTVAIEPPELETRVAILMRKAQESGINLPDEVAFFIAKRLRSNVRELEGALNRVIANANFTGRPITIDFVREALRDLLALQEKLVTIDNIQKTVAEYYKIKMADMLSKRRSRSVARPRQVAMALSKELTNQSLPEIGDAFGGRDHTTVLHACRKIAQLREESHDIKEDYANLIRTLSS</sequence>
<feature type="chain" id="PRO_1000189807" description="Chromosomal replication initiator protein DnaA">
    <location>
        <begin position="1"/>
        <end position="462"/>
    </location>
</feature>
<feature type="region of interest" description="Domain I, interacts with DnaA modulators" evidence="1">
    <location>
        <begin position="1"/>
        <end position="84"/>
    </location>
</feature>
<feature type="region of interest" description="Domain II" evidence="1">
    <location>
        <begin position="84"/>
        <end position="125"/>
    </location>
</feature>
<feature type="region of interest" description="Domain III, AAA+ region" evidence="1">
    <location>
        <begin position="126"/>
        <end position="342"/>
    </location>
</feature>
<feature type="region of interest" description="Domain IV, binds dsDNA" evidence="1">
    <location>
        <begin position="343"/>
        <end position="462"/>
    </location>
</feature>
<feature type="binding site" evidence="1">
    <location>
        <position position="170"/>
    </location>
    <ligand>
        <name>ATP</name>
        <dbReference type="ChEBI" id="CHEBI:30616"/>
    </ligand>
</feature>
<feature type="binding site" evidence="1">
    <location>
        <position position="172"/>
    </location>
    <ligand>
        <name>ATP</name>
        <dbReference type="ChEBI" id="CHEBI:30616"/>
    </ligand>
</feature>
<feature type="binding site" evidence="1">
    <location>
        <position position="173"/>
    </location>
    <ligand>
        <name>ATP</name>
        <dbReference type="ChEBI" id="CHEBI:30616"/>
    </ligand>
</feature>
<feature type="binding site" evidence="1">
    <location>
        <position position="174"/>
    </location>
    <ligand>
        <name>ATP</name>
        <dbReference type="ChEBI" id="CHEBI:30616"/>
    </ligand>
</feature>
<evidence type="ECO:0000255" key="1">
    <source>
        <dbReference type="HAMAP-Rule" id="MF_00377"/>
    </source>
</evidence>
<organism>
    <name type="scientific">Shewanella baltica (strain OS223)</name>
    <dbReference type="NCBI Taxonomy" id="407976"/>
    <lineage>
        <taxon>Bacteria</taxon>
        <taxon>Pseudomonadati</taxon>
        <taxon>Pseudomonadota</taxon>
        <taxon>Gammaproteobacteria</taxon>
        <taxon>Alteromonadales</taxon>
        <taxon>Shewanellaceae</taxon>
        <taxon>Shewanella</taxon>
    </lineage>
</organism>
<protein>
    <recommendedName>
        <fullName evidence="1">Chromosomal replication initiator protein DnaA</fullName>
    </recommendedName>
</protein>
<name>DNAA_SHEB2</name>
<dbReference type="EMBL" id="CP001252">
    <property type="protein sequence ID" value="ACK44545.1"/>
    <property type="molecule type" value="Genomic_DNA"/>
</dbReference>
<dbReference type="RefSeq" id="WP_006083826.1">
    <property type="nucleotide sequence ID" value="NC_011663.1"/>
</dbReference>
<dbReference type="SMR" id="B8E3P4"/>
<dbReference type="GeneID" id="11774105"/>
<dbReference type="KEGG" id="sbp:Sbal223_0001"/>
<dbReference type="HOGENOM" id="CLU_026910_0_1_6"/>
<dbReference type="Proteomes" id="UP000002507">
    <property type="component" value="Chromosome"/>
</dbReference>
<dbReference type="GO" id="GO:0005737">
    <property type="term" value="C:cytoplasm"/>
    <property type="evidence" value="ECO:0007669"/>
    <property type="project" value="UniProtKB-SubCell"/>
</dbReference>
<dbReference type="GO" id="GO:0005886">
    <property type="term" value="C:plasma membrane"/>
    <property type="evidence" value="ECO:0007669"/>
    <property type="project" value="TreeGrafter"/>
</dbReference>
<dbReference type="GO" id="GO:0005524">
    <property type="term" value="F:ATP binding"/>
    <property type="evidence" value="ECO:0007669"/>
    <property type="project" value="UniProtKB-UniRule"/>
</dbReference>
<dbReference type="GO" id="GO:0016887">
    <property type="term" value="F:ATP hydrolysis activity"/>
    <property type="evidence" value="ECO:0007669"/>
    <property type="project" value="InterPro"/>
</dbReference>
<dbReference type="GO" id="GO:0003688">
    <property type="term" value="F:DNA replication origin binding"/>
    <property type="evidence" value="ECO:0007669"/>
    <property type="project" value="UniProtKB-UniRule"/>
</dbReference>
<dbReference type="GO" id="GO:0008289">
    <property type="term" value="F:lipid binding"/>
    <property type="evidence" value="ECO:0007669"/>
    <property type="project" value="UniProtKB-KW"/>
</dbReference>
<dbReference type="GO" id="GO:0006270">
    <property type="term" value="P:DNA replication initiation"/>
    <property type="evidence" value="ECO:0007669"/>
    <property type="project" value="UniProtKB-UniRule"/>
</dbReference>
<dbReference type="GO" id="GO:0006275">
    <property type="term" value="P:regulation of DNA replication"/>
    <property type="evidence" value="ECO:0007669"/>
    <property type="project" value="UniProtKB-UniRule"/>
</dbReference>
<dbReference type="CDD" id="cd00009">
    <property type="entry name" value="AAA"/>
    <property type="match status" value="1"/>
</dbReference>
<dbReference type="CDD" id="cd06571">
    <property type="entry name" value="Bac_DnaA_C"/>
    <property type="match status" value="1"/>
</dbReference>
<dbReference type="FunFam" id="1.10.1750.10:FF:000001">
    <property type="entry name" value="Chromosomal replication initiator protein DnaA"/>
    <property type="match status" value="1"/>
</dbReference>
<dbReference type="FunFam" id="1.10.8.60:FF:000003">
    <property type="entry name" value="Chromosomal replication initiator protein DnaA"/>
    <property type="match status" value="1"/>
</dbReference>
<dbReference type="FunFam" id="3.30.300.180:FF:000001">
    <property type="entry name" value="Chromosomal replication initiator protein DnaA"/>
    <property type="match status" value="1"/>
</dbReference>
<dbReference type="FunFam" id="3.40.50.300:FF:000103">
    <property type="entry name" value="Chromosomal replication initiator protein DnaA"/>
    <property type="match status" value="1"/>
</dbReference>
<dbReference type="Gene3D" id="1.10.1750.10">
    <property type="match status" value="1"/>
</dbReference>
<dbReference type="Gene3D" id="1.10.8.60">
    <property type="match status" value="1"/>
</dbReference>
<dbReference type="Gene3D" id="3.30.300.180">
    <property type="match status" value="1"/>
</dbReference>
<dbReference type="Gene3D" id="3.40.50.300">
    <property type="entry name" value="P-loop containing nucleotide triphosphate hydrolases"/>
    <property type="match status" value="1"/>
</dbReference>
<dbReference type="HAMAP" id="MF_00377">
    <property type="entry name" value="DnaA_bact"/>
    <property type="match status" value="1"/>
</dbReference>
<dbReference type="InterPro" id="IPR003593">
    <property type="entry name" value="AAA+_ATPase"/>
</dbReference>
<dbReference type="InterPro" id="IPR001957">
    <property type="entry name" value="Chromosome_initiator_DnaA"/>
</dbReference>
<dbReference type="InterPro" id="IPR020591">
    <property type="entry name" value="Chromosome_initiator_DnaA-like"/>
</dbReference>
<dbReference type="InterPro" id="IPR018312">
    <property type="entry name" value="Chromosome_initiator_DnaA_CS"/>
</dbReference>
<dbReference type="InterPro" id="IPR013159">
    <property type="entry name" value="DnaA_C"/>
</dbReference>
<dbReference type="InterPro" id="IPR013317">
    <property type="entry name" value="DnaA_dom"/>
</dbReference>
<dbReference type="InterPro" id="IPR024633">
    <property type="entry name" value="DnaA_N_dom"/>
</dbReference>
<dbReference type="InterPro" id="IPR038454">
    <property type="entry name" value="DnaA_N_sf"/>
</dbReference>
<dbReference type="InterPro" id="IPR055199">
    <property type="entry name" value="Hda_lid"/>
</dbReference>
<dbReference type="InterPro" id="IPR027417">
    <property type="entry name" value="P-loop_NTPase"/>
</dbReference>
<dbReference type="InterPro" id="IPR010921">
    <property type="entry name" value="Trp_repressor/repl_initiator"/>
</dbReference>
<dbReference type="NCBIfam" id="TIGR00362">
    <property type="entry name" value="DnaA"/>
    <property type="match status" value="1"/>
</dbReference>
<dbReference type="PANTHER" id="PTHR30050">
    <property type="entry name" value="CHROMOSOMAL REPLICATION INITIATOR PROTEIN DNAA"/>
    <property type="match status" value="1"/>
</dbReference>
<dbReference type="PANTHER" id="PTHR30050:SF2">
    <property type="entry name" value="CHROMOSOMAL REPLICATION INITIATOR PROTEIN DNAA"/>
    <property type="match status" value="1"/>
</dbReference>
<dbReference type="Pfam" id="PF00308">
    <property type="entry name" value="Bac_DnaA"/>
    <property type="match status" value="1"/>
</dbReference>
<dbReference type="Pfam" id="PF08299">
    <property type="entry name" value="Bac_DnaA_C"/>
    <property type="match status" value="1"/>
</dbReference>
<dbReference type="Pfam" id="PF11638">
    <property type="entry name" value="DnaA_N"/>
    <property type="match status" value="1"/>
</dbReference>
<dbReference type="Pfam" id="PF22688">
    <property type="entry name" value="Hda_lid"/>
    <property type="match status" value="1"/>
</dbReference>
<dbReference type="PRINTS" id="PR00051">
    <property type="entry name" value="DNAA"/>
</dbReference>
<dbReference type="SMART" id="SM00382">
    <property type="entry name" value="AAA"/>
    <property type="match status" value="1"/>
</dbReference>
<dbReference type="SMART" id="SM00760">
    <property type="entry name" value="Bac_DnaA_C"/>
    <property type="match status" value="1"/>
</dbReference>
<dbReference type="SUPFAM" id="SSF52540">
    <property type="entry name" value="P-loop containing nucleoside triphosphate hydrolases"/>
    <property type="match status" value="1"/>
</dbReference>
<dbReference type="SUPFAM" id="SSF48295">
    <property type="entry name" value="TrpR-like"/>
    <property type="match status" value="1"/>
</dbReference>
<dbReference type="PROSITE" id="PS01008">
    <property type="entry name" value="DNAA"/>
    <property type="match status" value="1"/>
</dbReference>
<keyword id="KW-0067">ATP-binding</keyword>
<keyword id="KW-0963">Cytoplasm</keyword>
<keyword id="KW-0235">DNA replication</keyword>
<keyword id="KW-0238">DNA-binding</keyword>
<keyword id="KW-0446">Lipid-binding</keyword>
<keyword id="KW-0547">Nucleotide-binding</keyword>
<gene>
    <name evidence="1" type="primary">dnaA</name>
    <name type="ordered locus">Sbal223_0001</name>
</gene>
<proteinExistence type="inferred from homology"/>